<dbReference type="EC" id="2.5.1.141" evidence="1"/>
<dbReference type="EMBL" id="CP000539">
    <property type="protein sequence ID" value="ABM43640.1"/>
    <property type="molecule type" value="Genomic_DNA"/>
</dbReference>
<dbReference type="SMR" id="A1WBL5"/>
<dbReference type="STRING" id="232721.Ajs_3527"/>
<dbReference type="KEGG" id="ajs:Ajs_3527"/>
<dbReference type="eggNOG" id="COG0109">
    <property type="taxonomic scope" value="Bacteria"/>
</dbReference>
<dbReference type="HOGENOM" id="CLU_029631_0_2_4"/>
<dbReference type="UniPathway" id="UPA00834">
    <property type="reaction ID" value="UER00712"/>
</dbReference>
<dbReference type="Proteomes" id="UP000000645">
    <property type="component" value="Chromosome"/>
</dbReference>
<dbReference type="GO" id="GO:0005886">
    <property type="term" value="C:plasma membrane"/>
    <property type="evidence" value="ECO:0007669"/>
    <property type="project" value="UniProtKB-SubCell"/>
</dbReference>
<dbReference type="GO" id="GO:0008495">
    <property type="term" value="F:protoheme IX farnesyltransferase activity"/>
    <property type="evidence" value="ECO:0007669"/>
    <property type="project" value="UniProtKB-UniRule"/>
</dbReference>
<dbReference type="GO" id="GO:0048034">
    <property type="term" value="P:heme O biosynthetic process"/>
    <property type="evidence" value="ECO:0007669"/>
    <property type="project" value="UniProtKB-UniRule"/>
</dbReference>
<dbReference type="CDD" id="cd13957">
    <property type="entry name" value="PT_UbiA_Cox10"/>
    <property type="match status" value="1"/>
</dbReference>
<dbReference type="Gene3D" id="1.10.357.140">
    <property type="entry name" value="UbiA prenyltransferase"/>
    <property type="match status" value="1"/>
</dbReference>
<dbReference type="HAMAP" id="MF_00154">
    <property type="entry name" value="CyoE_CtaB"/>
    <property type="match status" value="1"/>
</dbReference>
<dbReference type="InterPro" id="IPR006369">
    <property type="entry name" value="Protohaem_IX_farnesylTrfase"/>
</dbReference>
<dbReference type="InterPro" id="IPR000537">
    <property type="entry name" value="UbiA_prenyltransferase"/>
</dbReference>
<dbReference type="InterPro" id="IPR030470">
    <property type="entry name" value="UbiA_prenylTrfase_CS"/>
</dbReference>
<dbReference type="InterPro" id="IPR044878">
    <property type="entry name" value="UbiA_sf"/>
</dbReference>
<dbReference type="NCBIfam" id="TIGR01473">
    <property type="entry name" value="cyoE_ctaB"/>
    <property type="match status" value="1"/>
</dbReference>
<dbReference type="NCBIfam" id="NF003349">
    <property type="entry name" value="PRK04375.1-2"/>
    <property type="match status" value="1"/>
</dbReference>
<dbReference type="PANTHER" id="PTHR43448:SF7">
    <property type="entry name" value="4-HYDROXYBENZOATE SOLANESYLTRANSFERASE"/>
    <property type="match status" value="1"/>
</dbReference>
<dbReference type="PANTHER" id="PTHR43448">
    <property type="entry name" value="PROTOHEME IX FARNESYLTRANSFERASE, MITOCHONDRIAL"/>
    <property type="match status" value="1"/>
</dbReference>
<dbReference type="Pfam" id="PF01040">
    <property type="entry name" value="UbiA"/>
    <property type="match status" value="1"/>
</dbReference>
<dbReference type="PROSITE" id="PS00943">
    <property type="entry name" value="UBIA"/>
    <property type="match status" value="1"/>
</dbReference>
<reference key="1">
    <citation type="submission" date="2006-12" db="EMBL/GenBank/DDBJ databases">
        <title>Complete sequence of chromosome 1 of Acidovorax sp. JS42.</title>
        <authorList>
            <person name="Copeland A."/>
            <person name="Lucas S."/>
            <person name="Lapidus A."/>
            <person name="Barry K."/>
            <person name="Detter J.C."/>
            <person name="Glavina del Rio T."/>
            <person name="Dalin E."/>
            <person name="Tice H."/>
            <person name="Pitluck S."/>
            <person name="Chertkov O."/>
            <person name="Brettin T."/>
            <person name="Bruce D."/>
            <person name="Han C."/>
            <person name="Tapia R."/>
            <person name="Gilna P."/>
            <person name="Schmutz J."/>
            <person name="Larimer F."/>
            <person name="Land M."/>
            <person name="Hauser L."/>
            <person name="Kyrpides N."/>
            <person name="Kim E."/>
            <person name="Stahl D."/>
            <person name="Richardson P."/>
        </authorList>
    </citation>
    <scope>NUCLEOTIDE SEQUENCE [LARGE SCALE GENOMIC DNA]</scope>
    <source>
        <strain>JS42</strain>
    </source>
</reference>
<protein>
    <recommendedName>
        <fullName evidence="1">Protoheme IX farnesyltransferase</fullName>
        <ecNumber evidence="1">2.5.1.141</ecNumber>
    </recommendedName>
    <alternativeName>
        <fullName evidence="1">Heme B farnesyltransferase</fullName>
    </alternativeName>
    <alternativeName>
        <fullName evidence="1">Heme O synthase</fullName>
    </alternativeName>
</protein>
<feature type="chain" id="PRO_0000326987" description="Protoheme IX farnesyltransferase">
    <location>
        <begin position="1"/>
        <end position="306"/>
    </location>
</feature>
<feature type="transmembrane region" description="Helical" evidence="1">
    <location>
        <begin position="32"/>
        <end position="52"/>
    </location>
</feature>
<feature type="transmembrane region" description="Helical" evidence="1">
    <location>
        <begin position="57"/>
        <end position="77"/>
    </location>
</feature>
<feature type="transmembrane region" description="Helical" evidence="1">
    <location>
        <begin position="108"/>
        <end position="128"/>
    </location>
</feature>
<feature type="transmembrane region" description="Helical" evidence="1">
    <location>
        <begin position="129"/>
        <end position="149"/>
    </location>
</feature>
<feature type="transmembrane region" description="Helical" evidence="1">
    <location>
        <begin position="157"/>
        <end position="177"/>
    </location>
</feature>
<feature type="transmembrane region" description="Helical" evidence="1">
    <location>
        <begin position="183"/>
        <end position="203"/>
    </location>
</feature>
<feature type="transmembrane region" description="Helical" evidence="1">
    <location>
        <begin position="230"/>
        <end position="250"/>
    </location>
</feature>
<feature type="transmembrane region" description="Helical" evidence="1">
    <location>
        <begin position="252"/>
        <end position="272"/>
    </location>
</feature>
<feature type="transmembrane region" description="Helical" evidence="1">
    <location>
        <begin position="285"/>
        <end position="305"/>
    </location>
</feature>
<evidence type="ECO:0000255" key="1">
    <source>
        <dbReference type="HAMAP-Rule" id="MF_00154"/>
    </source>
</evidence>
<name>COXX_ACISJ</name>
<organism>
    <name type="scientific">Acidovorax sp. (strain JS42)</name>
    <dbReference type="NCBI Taxonomy" id="232721"/>
    <lineage>
        <taxon>Bacteria</taxon>
        <taxon>Pseudomonadati</taxon>
        <taxon>Pseudomonadota</taxon>
        <taxon>Betaproteobacteria</taxon>
        <taxon>Burkholderiales</taxon>
        <taxon>Comamonadaceae</taxon>
        <taxon>Acidovorax</taxon>
    </lineage>
</organism>
<accession>A1WBL5</accession>
<proteinExistence type="inferred from homology"/>
<comment type="function">
    <text evidence="1">Converts heme B (protoheme IX) to heme O by substitution of the vinyl group on carbon 2 of heme B porphyrin ring with a hydroxyethyl farnesyl side group.</text>
</comment>
<comment type="catalytic activity">
    <reaction evidence="1">
        <text>heme b + (2E,6E)-farnesyl diphosphate + H2O = Fe(II)-heme o + diphosphate</text>
        <dbReference type="Rhea" id="RHEA:28070"/>
        <dbReference type="ChEBI" id="CHEBI:15377"/>
        <dbReference type="ChEBI" id="CHEBI:33019"/>
        <dbReference type="ChEBI" id="CHEBI:60344"/>
        <dbReference type="ChEBI" id="CHEBI:60530"/>
        <dbReference type="ChEBI" id="CHEBI:175763"/>
        <dbReference type="EC" id="2.5.1.141"/>
    </reaction>
</comment>
<comment type="pathway">
    <text evidence="1">Porphyrin-containing compound metabolism; heme O biosynthesis; heme O from protoheme: step 1/1.</text>
</comment>
<comment type="subcellular location">
    <subcellularLocation>
        <location evidence="1">Cell inner membrane</location>
        <topology evidence="1">Multi-pass membrane protein</topology>
    </subcellularLocation>
</comment>
<comment type="miscellaneous">
    <text evidence="1">Carbon 2 of the heme B porphyrin ring is defined according to the Fischer nomenclature.</text>
</comment>
<comment type="similarity">
    <text evidence="1">Belongs to the UbiA prenyltransferase family. Protoheme IX farnesyltransferase subfamily.</text>
</comment>
<sequence length="306" mass="33410">MSAAPAPAPAAAAPRALPSRLSQFYALTKPRVVQLIVFCAFIGMVLAVPGMPSGAQWALMAVASAGIWLVAGAAAAFNCIVEQGIDAKMKRTAWRPTAKGELSNTQTLLFSALLCAAGSALLYWWVNPLTMWLTFATFVGYAVIYTVILKPLTPQNIVIGGASGAMPPVLGWAAMTGEVGPEALILFLIIFLWTPPHFWALALYRVEDYRKSGLPMLPVTHGNEFTRLQVFLYTLILFAGCLMPFVYGMSSWIYLAAAVVLSAGFCLYGFRLWRDYSDTLARKTFRFSLIHLSLLFAALLVDHYLL</sequence>
<keyword id="KW-0997">Cell inner membrane</keyword>
<keyword id="KW-1003">Cell membrane</keyword>
<keyword id="KW-0350">Heme biosynthesis</keyword>
<keyword id="KW-0472">Membrane</keyword>
<keyword id="KW-0808">Transferase</keyword>
<keyword id="KW-0812">Transmembrane</keyword>
<keyword id="KW-1133">Transmembrane helix</keyword>
<gene>
    <name evidence="1" type="primary">ctaB</name>
    <name type="ordered locus">Ajs_3527</name>
</gene>